<protein>
    <recommendedName>
        <fullName evidence="1">Enolase-phosphatase E1</fullName>
        <ecNumber evidence="1">3.1.3.77</ecNumber>
    </recommendedName>
    <alternativeName>
        <fullName evidence="1">2,3-diketo-5-methylthio-1-phosphopentane phosphatase</fullName>
    </alternativeName>
</protein>
<name>MTNC_SHEPC</name>
<gene>
    <name evidence="1" type="primary">mtnC</name>
    <name type="ordered locus">Sputcn32_0069</name>
</gene>
<feature type="chain" id="PRO_0000357406" description="Enolase-phosphatase E1">
    <location>
        <begin position="1"/>
        <end position="226"/>
    </location>
</feature>
<proteinExistence type="inferred from homology"/>
<accession>A4Y1H2</accession>
<dbReference type="EC" id="3.1.3.77" evidence="1"/>
<dbReference type="EMBL" id="CP000681">
    <property type="protein sequence ID" value="ABP73805.1"/>
    <property type="molecule type" value="Genomic_DNA"/>
</dbReference>
<dbReference type="SMR" id="A4Y1H2"/>
<dbReference type="STRING" id="319224.Sputcn32_0069"/>
<dbReference type="KEGG" id="spc:Sputcn32_0069"/>
<dbReference type="eggNOG" id="COG4229">
    <property type="taxonomic scope" value="Bacteria"/>
</dbReference>
<dbReference type="HOGENOM" id="CLU_023273_0_0_6"/>
<dbReference type="UniPathway" id="UPA00904">
    <property type="reaction ID" value="UER00876"/>
</dbReference>
<dbReference type="UniPathway" id="UPA00904">
    <property type="reaction ID" value="UER00877"/>
</dbReference>
<dbReference type="GO" id="GO:0043715">
    <property type="term" value="F:2,3-diketo-5-methylthiopentyl-1-phosphate enolase activity"/>
    <property type="evidence" value="ECO:0007669"/>
    <property type="project" value="UniProtKB-UniRule"/>
</dbReference>
<dbReference type="GO" id="GO:0043716">
    <property type="term" value="F:2-hydroxy-3-keto-5-methylthiopentenyl-1-phosphate phosphatase activity"/>
    <property type="evidence" value="ECO:0007669"/>
    <property type="project" value="UniProtKB-UniRule"/>
</dbReference>
<dbReference type="GO" id="GO:0043874">
    <property type="term" value="F:acireductone synthase activity"/>
    <property type="evidence" value="ECO:0007669"/>
    <property type="project" value="UniProtKB-EC"/>
</dbReference>
<dbReference type="GO" id="GO:0000287">
    <property type="term" value="F:magnesium ion binding"/>
    <property type="evidence" value="ECO:0007669"/>
    <property type="project" value="UniProtKB-UniRule"/>
</dbReference>
<dbReference type="GO" id="GO:0019509">
    <property type="term" value="P:L-methionine salvage from methylthioadenosine"/>
    <property type="evidence" value="ECO:0007669"/>
    <property type="project" value="UniProtKB-UniRule"/>
</dbReference>
<dbReference type="CDD" id="cd01629">
    <property type="entry name" value="HAD_EP"/>
    <property type="match status" value="1"/>
</dbReference>
<dbReference type="FunFam" id="1.10.720.60:FF:000008">
    <property type="entry name" value="Enolase-phosphatase E1"/>
    <property type="match status" value="1"/>
</dbReference>
<dbReference type="Gene3D" id="1.10.720.60">
    <property type="match status" value="1"/>
</dbReference>
<dbReference type="Gene3D" id="3.40.50.1000">
    <property type="entry name" value="HAD superfamily/HAD-like"/>
    <property type="match status" value="1"/>
</dbReference>
<dbReference type="HAMAP" id="MF_01681">
    <property type="entry name" value="Salvage_MtnC"/>
    <property type="match status" value="1"/>
</dbReference>
<dbReference type="InterPro" id="IPR023943">
    <property type="entry name" value="Enolase-ppase_E1"/>
</dbReference>
<dbReference type="InterPro" id="IPR036412">
    <property type="entry name" value="HAD-like_sf"/>
</dbReference>
<dbReference type="InterPro" id="IPR006439">
    <property type="entry name" value="HAD-SF_hydro_IA"/>
</dbReference>
<dbReference type="InterPro" id="IPR023214">
    <property type="entry name" value="HAD_sf"/>
</dbReference>
<dbReference type="NCBIfam" id="TIGR01691">
    <property type="entry name" value="enolase-ppase"/>
    <property type="match status" value="1"/>
</dbReference>
<dbReference type="NCBIfam" id="TIGR01549">
    <property type="entry name" value="HAD-SF-IA-v1"/>
    <property type="match status" value="1"/>
</dbReference>
<dbReference type="PANTHER" id="PTHR20371">
    <property type="entry name" value="ENOLASE-PHOSPHATASE E1"/>
    <property type="match status" value="1"/>
</dbReference>
<dbReference type="PANTHER" id="PTHR20371:SF1">
    <property type="entry name" value="ENOLASE-PHOSPHATASE E1"/>
    <property type="match status" value="1"/>
</dbReference>
<dbReference type="Pfam" id="PF00702">
    <property type="entry name" value="Hydrolase"/>
    <property type="match status" value="1"/>
</dbReference>
<dbReference type="PRINTS" id="PR00413">
    <property type="entry name" value="HADHALOGNASE"/>
</dbReference>
<dbReference type="SFLD" id="SFLDG01129">
    <property type="entry name" value="C1.5:_HAD__Beta-PGM__Phosphata"/>
    <property type="match status" value="1"/>
</dbReference>
<dbReference type="SFLD" id="SFLDF00044">
    <property type="entry name" value="enolase-phosphatase"/>
    <property type="match status" value="1"/>
</dbReference>
<dbReference type="SUPFAM" id="SSF56784">
    <property type="entry name" value="HAD-like"/>
    <property type="match status" value="1"/>
</dbReference>
<evidence type="ECO:0000255" key="1">
    <source>
        <dbReference type="HAMAP-Rule" id="MF_01681"/>
    </source>
</evidence>
<keyword id="KW-0028">Amino-acid biosynthesis</keyword>
<keyword id="KW-0378">Hydrolase</keyword>
<keyword id="KW-0460">Magnesium</keyword>
<keyword id="KW-0479">Metal-binding</keyword>
<keyword id="KW-0486">Methionine biosynthesis</keyword>
<sequence>MGIRAIVVDTAGTTTDLNFIQDVLFPYSVKALPDFLEQNQHNVLVENCICDTKDIALEPEADLARVTEILQQWVNEDRKATPLKTLQGLIWKQGYAHGEFKGHIFPDFIEAVKRFSTQNLRIYSFSSGSVDAQKLLFSHSDGGDLTEMFNGHFDTRTGNKLDKQAYCNILNTISLSPKQVLFVSDVIEELKAADAAGMMTCQMVRDSKQRTGDFRKISSFDELQIE</sequence>
<reference key="1">
    <citation type="submission" date="2007-04" db="EMBL/GenBank/DDBJ databases">
        <title>Complete sequence of Shewanella putrefaciens CN-32.</title>
        <authorList>
            <consortium name="US DOE Joint Genome Institute"/>
            <person name="Copeland A."/>
            <person name="Lucas S."/>
            <person name="Lapidus A."/>
            <person name="Barry K."/>
            <person name="Detter J.C."/>
            <person name="Glavina del Rio T."/>
            <person name="Hammon N."/>
            <person name="Israni S."/>
            <person name="Dalin E."/>
            <person name="Tice H."/>
            <person name="Pitluck S."/>
            <person name="Chain P."/>
            <person name="Malfatti S."/>
            <person name="Shin M."/>
            <person name="Vergez L."/>
            <person name="Schmutz J."/>
            <person name="Larimer F."/>
            <person name="Land M."/>
            <person name="Hauser L."/>
            <person name="Kyrpides N."/>
            <person name="Mikhailova N."/>
            <person name="Romine M.F."/>
            <person name="Fredrickson J."/>
            <person name="Tiedje J."/>
            <person name="Richardson P."/>
        </authorList>
    </citation>
    <scope>NUCLEOTIDE SEQUENCE [LARGE SCALE GENOMIC DNA]</scope>
    <source>
        <strain>CN-32 / ATCC BAA-453</strain>
    </source>
</reference>
<comment type="function">
    <text evidence="1">Bifunctional enzyme that catalyzes the enolization of 2,3-diketo-5-methylthiopentyl-1-phosphate (DK-MTP-1-P) into the intermediate 2-hydroxy-3-keto-5-methylthiopentenyl-1-phosphate (HK-MTPenyl-1-P), which is then dephosphorylated to form the acireductone 1,2-dihydroxy-3-keto-5-methylthiopentene (DHK-MTPene).</text>
</comment>
<comment type="catalytic activity">
    <reaction evidence="1">
        <text>5-methylsulfanyl-2,3-dioxopentyl phosphate + H2O = 1,2-dihydroxy-5-(methylsulfanyl)pent-1-en-3-one + phosphate</text>
        <dbReference type="Rhea" id="RHEA:21700"/>
        <dbReference type="ChEBI" id="CHEBI:15377"/>
        <dbReference type="ChEBI" id="CHEBI:43474"/>
        <dbReference type="ChEBI" id="CHEBI:49252"/>
        <dbReference type="ChEBI" id="CHEBI:58828"/>
        <dbReference type="EC" id="3.1.3.77"/>
    </reaction>
</comment>
<comment type="cofactor">
    <cofactor evidence="1">
        <name>Mg(2+)</name>
        <dbReference type="ChEBI" id="CHEBI:18420"/>
    </cofactor>
    <text evidence="1">Binds 1 Mg(2+) ion per subunit.</text>
</comment>
<comment type="pathway">
    <text evidence="1">Amino-acid biosynthesis; L-methionine biosynthesis via salvage pathway; L-methionine from S-methyl-5-thio-alpha-D-ribose 1-phosphate: step 3/6.</text>
</comment>
<comment type="pathway">
    <text evidence="1">Amino-acid biosynthesis; L-methionine biosynthesis via salvage pathway; L-methionine from S-methyl-5-thio-alpha-D-ribose 1-phosphate: step 4/6.</text>
</comment>
<comment type="subunit">
    <text evidence="1">Monomer.</text>
</comment>
<comment type="similarity">
    <text evidence="1">Belongs to the HAD-like hydrolase superfamily. MasA/MtnC family.</text>
</comment>
<organism>
    <name type="scientific">Shewanella putrefaciens (strain CN-32 / ATCC BAA-453)</name>
    <dbReference type="NCBI Taxonomy" id="319224"/>
    <lineage>
        <taxon>Bacteria</taxon>
        <taxon>Pseudomonadati</taxon>
        <taxon>Pseudomonadota</taxon>
        <taxon>Gammaproteobacteria</taxon>
        <taxon>Alteromonadales</taxon>
        <taxon>Shewanellaceae</taxon>
        <taxon>Shewanella</taxon>
    </lineage>
</organism>